<feature type="chain" id="PRO_1000003485" description="Small ribosomal subunit protein bS18">
    <location>
        <begin position="1"/>
        <end position="75"/>
    </location>
</feature>
<sequence length="75" mass="8893">MMNKKRRKKKRVCQFCADKNAKIDYKSTQRLQKYITERGKILPRRISGTCAKHQRELTVAIKRARNIALLPYTLD</sequence>
<accession>Q181R4</accession>
<protein>
    <recommendedName>
        <fullName evidence="1">Small ribosomal subunit protein bS18</fullName>
    </recommendedName>
    <alternativeName>
        <fullName evidence="2">30S ribosomal protein S18</fullName>
    </alternativeName>
</protein>
<keyword id="KW-1185">Reference proteome</keyword>
<keyword id="KW-0687">Ribonucleoprotein</keyword>
<keyword id="KW-0689">Ribosomal protein</keyword>
<keyword id="KW-0694">RNA-binding</keyword>
<keyword id="KW-0699">rRNA-binding</keyword>
<comment type="function">
    <text evidence="1">Binds as a heterodimer with protein bS6 to the central domain of the 16S rRNA, where it helps stabilize the platform of the 30S subunit.</text>
</comment>
<comment type="subunit">
    <text evidence="1">Part of the 30S ribosomal subunit. Forms a tight heterodimer with protein bS6.</text>
</comment>
<comment type="similarity">
    <text evidence="1">Belongs to the bacterial ribosomal protein bS18 family.</text>
</comment>
<evidence type="ECO:0000255" key="1">
    <source>
        <dbReference type="HAMAP-Rule" id="MF_00270"/>
    </source>
</evidence>
<evidence type="ECO:0000305" key="2"/>
<proteinExistence type="inferred from homology"/>
<reference key="1">
    <citation type="journal article" date="2006" name="Nat. Genet.">
        <title>The multidrug-resistant human pathogen Clostridium difficile has a highly mobile, mosaic genome.</title>
        <authorList>
            <person name="Sebaihia M."/>
            <person name="Wren B.W."/>
            <person name="Mullany P."/>
            <person name="Fairweather N.F."/>
            <person name="Minton N."/>
            <person name="Stabler R."/>
            <person name="Thomson N.R."/>
            <person name="Roberts A.P."/>
            <person name="Cerdeno-Tarraga A.M."/>
            <person name="Wang H."/>
            <person name="Holden M.T.G."/>
            <person name="Wright A."/>
            <person name="Churcher C."/>
            <person name="Quail M.A."/>
            <person name="Baker S."/>
            <person name="Bason N."/>
            <person name="Brooks K."/>
            <person name="Chillingworth T."/>
            <person name="Cronin A."/>
            <person name="Davis P."/>
            <person name="Dowd L."/>
            <person name="Fraser A."/>
            <person name="Feltwell T."/>
            <person name="Hance Z."/>
            <person name="Holroyd S."/>
            <person name="Jagels K."/>
            <person name="Moule S."/>
            <person name="Mungall K."/>
            <person name="Price C."/>
            <person name="Rabbinowitsch E."/>
            <person name="Sharp S."/>
            <person name="Simmonds M."/>
            <person name="Stevens K."/>
            <person name="Unwin L."/>
            <person name="Whithead S."/>
            <person name="Dupuy B."/>
            <person name="Dougan G."/>
            <person name="Barrell B."/>
            <person name="Parkhill J."/>
        </authorList>
    </citation>
    <scope>NUCLEOTIDE SEQUENCE [LARGE SCALE GENOMIC DNA]</scope>
    <source>
        <strain>630</strain>
    </source>
</reference>
<name>RS18_CLOD6</name>
<dbReference type="EMBL" id="AM180355">
    <property type="protein sequence ID" value="CAJ70570.1"/>
    <property type="molecule type" value="Genomic_DNA"/>
</dbReference>
<dbReference type="RefSeq" id="WP_003420527.1">
    <property type="nucleotide sequence ID" value="NZ_JAUPES010000007.1"/>
</dbReference>
<dbReference type="RefSeq" id="YP_001090186.1">
    <property type="nucleotide sequence ID" value="NC_009089.1"/>
</dbReference>
<dbReference type="SMR" id="Q181R4"/>
<dbReference type="STRING" id="272563.CD630_36611"/>
<dbReference type="EnsemblBacteria" id="CAJ70570">
    <property type="protein sequence ID" value="CAJ70570"/>
    <property type="gene ID" value="CD630_36611"/>
</dbReference>
<dbReference type="GeneID" id="66356133"/>
<dbReference type="KEGG" id="cdf:CD630_36611"/>
<dbReference type="KEGG" id="pdc:CDIF630_03990"/>
<dbReference type="PATRIC" id="fig|272563.120.peg.3872"/>
<dbReference type="eggNOG" id="COG0238">
    <property type="taxonomic scope" value="Bacteria"/>
</dbReference>
<dbReference type="OrthoDB" id="9812008at2"/>
<dbReference type="PhylomeDB" id="Q181R4"/>
<dbReference type="BioCyc" id="PDIF272563:G12WB-3853-MONOMER"/>
<dbReference type="Proteomes" id="UP000001978">
    <property type="component" value="Chromosome"/>
</dbReference>
<dbReference type="GO" id="GO:0022627">
    <property type="term" value="C:cytosolic small ribosomal subunit"/>
    <property type="evidence" value="ECO:0007669"/>
    <property type="project" value="TreeGrafter"/>
</dbReference>
<dbReference type="GO" id="GO:0070181">
    <property type="term" value="F:small ribosomal subunit rRNA binding"/>
    <property type="evidence" value="ECO:0007669"/>
    <property type="project" value="TreeGrafter"/>
</dbReference>
<dbReference type="GO" id="GO:0003735">
    <property type="term" value="F:structural constituent of ribosome"/>
    <property type="evidence" value="ECO:0007669"/>
    <property type="project" value="InterPro"/>
</dbReference>
<dbReference type="GO" id="GO:0006412">
    <property type="term" value="P:translation"/>
    <property type="evidence" value="ECO:0007669"/>
    <property type="project" value="UniProtKB-UniRule"/>
</dbReference>
<dbReference type="FunFam" id="4.10.640.10:FF:000004">
    <property type="entry name" value="30S ribosomal protein S18"/>
    <property type="match status" value="1"/>
</dbReference>
<dbReference type="Gene3D" id="4.10.640.10">
    <property type="entry name" value="Ribosomal protein S18"/>
    <property type="match status" value="1"/>
</dbReference>
<dbReference type="HAMAP" id="MF_00270">
    <property type="entry name" value="Ribosomal_bS18"/>
    <property type="match status" value="1"/>
</dbReference>
<dbReference type="InterPro" id="IPR001648">
    <property type="entry name" value="Ribosomal_bS18"/>
</dbReference>
<dbReference type="InterPro" id="IPR018275">
    <property type="entry name" value="Ribosomal_bS18_CS"/>
</dbReference>
<dbReference type="InterPro" id="IPR036870">
    <property type="entry name" value="Ribosomal_bS18_sf"/>
</dbReference>
<dbReference type="NCBIfam" id="TIGR00165">
    <property type="entry name" value="S18"/>
    <property type="match status" value="1"/>
</dbReference>
<dbReference type="PANTHER" id="PTHR13479">
    <property type="entry name" value="30S RIBOSOMAL PROTEIN S18"/>
    <property type="match status" value="1"/>
</dbReference>
<dbReference type="PANTHER" id="PTHR13479:SF40">
    <property type="entry name" value="SMALL RIBOSOMAL SUBUNIT PROTEIN BS18M"/>
    <property type="match status" value="1"/>
</dbReference>
<dbReference type="Pfam" id="PF01084">
    <property type="entry name" value="Ribosomal_S18"/>
    <property type="match status" value="1"/>
</dbReference>
<dbReference type="PRINTS" id="PR00974">
    <property type="entry name" value="RIBOSOMALS18"/>
</dbReference>
<dbReference type="SUPFAM" id="SSF46911">
    <property type="entry name" value="Ribosomal protein S18"/>
    <property type="match status" value="1"/>
</dbReference>
<dbReference type="PROSITE" id="PS00057">
    <property type="entry name" value="RIBOSOMAL_S18"/>
    <property type="match status" value="1"/>
</dbReference>
<gene>
    <name evidence="1" type="primary">rpsR</name>
    <name type="ordered locus">CD630_36611</name>
    <name type="ORF">CD3661A</name>
</gene>
<organism>
    <name type="scientific">Clostridioides difficile (strain 630)</name>
    <name type="common">Peptoclostridium difficile</name>
    <dbReference type="NCBI Taxonomy" id="272563"/>
    <lineage>
        <taxon>Bacteria</taxon>
        <taxon>Bacillati</taxon>
        <taxon>Bacillota</taxon>
        <taxon>Clostridia</taxon>
        <taxon>Peptostreptococcales</taxon>
        <taxon>Peptostreptococcaceae</taxon>
        <taxon>Clostridioides</taxon>
    </lineage>
</organism>